<accession>Q6F0S4</accession>
<feature type="chain" id="PRO_0000351772" description="Ribosome maturation factor RimM">
    <location>
        <begin position="1"/>
        <end position="166"/>
    </location>
</feature>
<feature type="domain" description="PRC barrel" evidence="1">
    <location>
        <begin position="90"/>
        <end position="165"/>
    </location>
</feature>
<sequence length="166" mass="19110">MENKNLLSIGKIVNTFGIKGAVKIALEKSIEVNDINGIKLLFIENTNNVIIPKQVESISMQKSHLVVYFKEHNHINEVEIFKGKKVKYLNDNDAFSIFYDLTYYSVVYNKQNGKVIETMFNGNHDLVKVLLENEEKAFWVPLVDVYTNNIDDESRIITLKNIEGLK</sequence>
<reference key="1">
    <citation type="submission" date="2004-06" db="EMBL/GenBank/DDBJ databases">
        <authorList>
            <person name="Birren B.W."/>
            <person name="Stange-Thomann N."/>
            <person name="Hafez N."/>
            <person name="DeCaprio D."/>
            <person name="Fisher S."/>
            <person name="Butler J."/>
            <person name="Elkins T."/>
            <person name="Kodira C.D."/>
            <person name="Major J."/>
            <person name="Wang S."/>
            <person name="Nicol R."/>
            <person name="Nusbaum C."/>
        </authorList>
    </citation>
    <scope>NUCLEOTIDE SEQUENCE [LARGE SCALE GENOMIC DNA]</scope>
    <source>
        <strain>ATCC 33453 / NBRC 100688 / NCTC 11704 / L1</strain>
    </source>
</reference>
<keyword id="KW-0143">Chaperone</keyword>
<keyword id="KW-0963">Cytoplasm</keyword>
<keyword id="KW-1185">Reference proteome</keyword>
<keyword id="KW-0690">Ribosome biogenesis</keyword>
<keyword id="KW-0698">rRNA processing</keyword>
<gene>
    <name evidence="1" type="primary">rimM</name>
    <name type="ordered locus">Mfl541</name>
</gene>
<comment type="function">
    <text evidence="1">An accessory protein needed during the final step in the assembly of 30S ribosomal subunit, possibly for assembly of the head region. Essential for efficient processing of 16S rRNA. May be needed both before and after RbfA during the maturation of 16S rRNA. It has affinity for free ribosomal 30S subunits but not for 70S ribosomes.</text>
</comment>
<comment type="subunit">
    <text evidence="1">Binds ribosomal protein uS19.</text>
</comment>
<comment type="subcellular location">
    <subcellularLocation>
        <location evidence="1">Cytoplasm</location>
    </subcellularLocation>
</comment>
<comment type="domain">
    <text evidence="1">The PRC barrel domain binds ribosomal protein uS19.</text>
</comment>
<comment type="similarity">
    <text evidence="1">Belongs to the RimM family.</text>
</comment>
<proteinExistence type="inferred from homology"/>
<organism>
    <name type="scientific">Mesoplasma florum (strain ATCC 33453 / NBRC 100688 / NCTC 11704 / L1)</name>
    <name type="common">Acholeplasma florum</name>
    <dbReference type="NCBI Taxonomy" id="265311"/>
    <lineage>
        <taxon>Bacteria</taxon>
        <taxon>Bacillati</taxon>
        <taxon>Mycoplasmatota</taxon>
        <taxon>Mollicutes</taxon>
        <taxon>Entomoplasmatales</taxon>
        <taxon>Entomoplasmataceae</taxon>
        <taxon>Mesoplasma</taxon>
    </lineage>
</organism>
<name>RIMM_MESFL</name>
<evidence type="ECO:0000255" key="1">
    <source>
        <dbReference type="HAMAP-Rule" id="MF_00014"/>
    </source>
</evidence>
<protein>
    <recommendedName>
        <fullName evidence="1">Ribosome maturation factor RimM</fullName>
    </recommendedName>
</protein>
<dbReference type="EMBL" id="AE017263">
    <property type="protein sequence ID" value="AAT75899.1"/>
    <property type="molecule type" value="Genomic_DNA"/>
</dbReference>
<dbReference type="RefSeq" id="WP_011183439.1">
    <property type="nucleotide sequence ID" value="NC_006055.1"/>
</dbReference>
<dbReference type="RefSeq" id="YP_053783.1">
    <property type="nucleotide sequence ID" value="NC_006055.1"/>
</dbReference>
<dbReference type="SMR" id="Q6F0S4"/>
<dbReference type="STRING" id="265311.Mfl541"/>
<dbReference type="PaxDb" id="265311-Mfl541"/>
<dbReference type="EnsemblBacteria" id="AAT75899">
    <property type="protein sequence ID" value="AAT75899"/>
    <property type="gene ID" value="Mfl541"/>
</dbReference>
<dbReference type="GeneID" id="2898116"/>
<dbReference type="KEGG" id="mfl:Mfl541"/>
<dbReference type="PATRIC" id="fig|265311.5.peg.545"/>
<dbReference type="eggNOG" id="COG0806">
    <property type="taxonomic scope" value="Bacteria"/>
</dbReference>
<dbReference type="HOGENOM" id="CLU_077636_3_2_14"/>
<dbReference type="OrthoDB" id="9810331at2"/>
<dbReference type="Proteomes" id="UP000006647">
    <property type="component" value="Chromosome"/>
</dbReference>
<dbReference type="GO" id="GO:0005737">
    <property type="term" value="C:cytoplasm"/>
    <property type="evidence" value="ECO:0007669"/>
    <property type="project" value="UniProtKB-SubCell"/>
</dbReference>
<dbReference type="GO" id="GO:0005840">
    <property type="term" value="C:ribosome"/>
    <property type="evidence" value="ECO:0007669"/>
    <property type="project" value="InterPro"/>
</dbReference>
<dbReference type="GO" id="GO:0043022">
    <property type="term" value="F:ribosome binding"/>
    <property type="evidence" value="ECO:0007669"/>
    <property type="project" value="InterPro"/>
</dbReference>
<dbReference type="GO" id="GO:0042274">
    <property type="term" value="P:ribosomal small subunit biogenesis"/>
    <property type="evidence" value="ECO:0007669"/>
    <property type="project" value="UniProtKB-UniRule"/>
</dbReference>
<dbReference type="GO" id="GO:0006364">
    <property type="term" value="P:rRNA processing"/>
    <property type="evidence" value="ECO:0007669"/>
    <property type="project" value="UniProtKB-UniRule"/>
</dbReference>
<dbReference type="Gene3D" id="2.30.30.240">
    <property type="entry name" value="PRC-barrel domain"/>
    <property type="match status" value="1"/>
</dbReference>
<dbReference type="Gene3D" id="2.40.30.60">
    <property type="entry name" value="RimM"/>
    <property type="match status" value="1"/>
</dbReference>
<dbReference type="HAMAP" id="MF_00014">
    <property type="entry name" value="Ribosome_mat_RimM"/>
    <property type="match status" value="1"/>
</dbReference>
<dbReference type="InterPro" id="IPR011961">
    <property type="entry name" value="RimM"/>
</dbReference>
<dbReference type="InterPro" id="IPR002676">
    <property type="entry name" value="RimM_N"/>
</dbReference>
<dbReference type="InterPro" id="IPR036976">
    <property type="entry name" value="RimM_N_sf"/>
</dbReference>
<dbReference type="InterPro" id="IPR009000">
    <property type="entry name" value="Transl_B-barrel_sf"/>
</dbReference>
<dbReference type="PANTHER" id="PTHR33692">
    <property type="entry name" value="RIBOSOME MATURATION FACTOR RIMM"/>
    <property type="match status" value="1"/>
</dbReference>
<dbReference type="PANTHER" id="PTHR33692:SF1">
    <property type="entry name" value="RIBOSOME MATURATION FACTOR RIMM"/>
    <property type="match status" value="1"/>
</dbReference>
<dbReference type="Pfam" id="PF01782">
    <property type="entry name" value="RimM"/>
    <property type="match status" value="1"/>
</dbReference>
<dbReference type="SUPFAM" id="SSF50447">
    <property type="entry name" value="Translation proteins"/>
    <property type="match status" value="1"/>
</dbReference>